<accession>A1KBB7</accession>
<organism>
    <name type="scientific">Azoarcus sp. (strain BH72)</name>
    <dbReference type="NCBI Taxonomy" id="418699"/>
    <lineage>
        <taxon>Bacteria</taxon>
        <taxon>Pseudomonadati</taxon>
        <taxon>Pseudomonadota</taxon>
        <taxon>Betaproteobacteria</taxon>
        <taxon>Rhodocyclales</taxon>
        <taxon>Zoogloeaceae</taxon>
        <taxon>Azoarcus</taxon>
    </lineage>
</organism>
<evidence type="ECO:0000255" key="1">
    <source>
        <dbReference type="HAMAP-Rule" id="MF_00739"/>
    </source>
</evidence>
<keyword id="KW-0963">Cytoplasm</keyword>
<keyword id="KW-0378">Hydrolase</keyword>
<keyword id="KW-1185">Reference proteome</keyword>
<reference key="1">
    <citation type="journal article" date="2006" name="Nat. Biotechnol.">
        <title>Complete genome of the mutualistic, N2-fixing grass endophyte Azoarcus sp. strain BH72.</title>
        <authorList>
            <person name="Krause A."/>
            <person name="Ramakumar A."/>
            <person name="Bartels D."/>
            <person name="Battistoni F."/>
            <person name="Bekel T."/>
            <person name="Boch J."/>
            <person name="Boehm M."/>
            <person name="Friedrich F."/>
            <person name="Hurek T."/>
            <person name="Krause L."/>
            <person name="Linke B."/>
            <person name="McHardy A.C."/>
            <person name="Sarkar A."/>
            <person name="Schneiker S."/>
            <person name="Syed A.A."/>
            <person name="Thauer R."/>
            <person name="Vorhoelter F.-J."/>
            <person name="Weidner S."/>
            <person name="Puehler A."/>
            <person name="Reinhold-Hurek B."/>
            <person name="Kaiser O."/>
            <person name="Goesmann A."/>
        </authorList>
    </citation>
    <scope>NUCLEOTIDE SEQUENCE [LARGE SCALE GENOMIC DNA]</scope>
    <source>
        <strain>BH72</strain>
    </source>
</reference>
<comment type="catalytic activity">
    <reaction evidence="1">
        <text>urea + 2 H2O + H(+) = hydrogencarbonate + 2 NH4(+)</text>
        <dbReference type="Rhea" id="RHEA:20557"/>
        <dbReference type="ChEBI" id="CHEBI:15377"/>
        <dbReference type="ChEBI" id="CHEBI:15378"/>
        <dbReference type="ChEBI" id="CHEBI:16199"/>
        <dbReference type="ChEBI" id="CHEBI:17544"/>
        <dbReference type="ChEBI" id="CHEBI:28938"/>
        <dbReference type="EC" id="3.5.1.5"/>
    </reaction>
</comment>
<comment type="pathway">
    <text evidence="1">Nitrogen metabolism; urea degradation; CO(2) and NH(3) from urea (urease route): step 1/1.</text>
</comment>
<comment type="subunit">
    <text evidence="1">Heterotrimer of UreA (gamma), UreB (beta) and UreC (alpha) subunits. Three heterotrimers associate to form the active enzyme.</text>
</comment>
<comment type="subcellular location">
    <subcellularLocation>
        <location evidence="1">Cytoplasm</location>
    </subcellularLocation>
</comment>
<comment type="similarity">
    <text evidence="1">Belongs to the urease gamma subunit family.</text>
</comment>
<name>URE3_AZOSB</name>
<gene>
    <name evidence="1" type="primary">ureA</name>
    <name type="ordered locus">azo3507</name>
</gene>
<feature type="chain" id="PRO_1000046311" description="Urease subunit gamma">
    <location>
        <begin position="1"/>
        <end position="100"/>
    </location>
</feature>
<dbReference type="EC" id="3.5.1.5" evidence="1"/>
<dbReference type="EMBL" id="AM406670">
    <property type="protein sequence ID" value="CAL96123.1"/>
    <property type="molecule type" value="Genomic_DNA"/>
</dbReference>
<dbReference type="RefSeq" id="WP_011767229.1">
    <property type="nucleotide sequence ID" value="NC_008702.1"/>
</dbReference>
<dbReference type="SMR" id="A1KBB7"/>
<dbReference type="STRING" id="62928.azo3507"/>
<dbReference type="KEGG" id="aoa:dqs_3650"/>
<dbReference type="KEGG" id="azo:azo3507"/>
<dbReference type="eggNOG" id="COG0831">
    <property type="taxonomic scope" value="Bacteria"/>
</dbReference>
<dbReference type="HOGENOM" id="CLU_145825_1_0_4"/>
<dbReference type="OrthoDB" id="9797217at2"/>
<dbReference type="UniPathway" id="UPA00258">
    <property type="reaction ID" value="UER00370"/>
</dbReference>
<dbReference type="Proteomes" id="UP000002588">
    <property type="component" value="Chromosome"/>
</dbReference>
<dbReference type="GO" id="GO:0005737">
    <property type="term" value="C:cytoplasm"/>
    <property type="evidence" value="ECO:0007669"/>
    <property type="project" value="UniProtKB-SubCell"/>
</dbReference>
<dbReference type="GO" id="GO:0016151">
    <property type="term" value="F:nickel cation binding"/>
    <property type="evidence" value="ECO:0007669"/>
    <property type="project" value="InterPro"/>
</dbReference>
<dbReference type="GO" id="GO:0009039">
    <property type="term" value="F:urease activity"/>
    <property type="evidence" value="ECO:0007669"/>
    <property type="project" value="UniProtKB-UniRule"/>
</dbReference>
<dbReference type="GO" id="GO:0043419">
    <property type="term" value="P:urea catabolic process"/>
    <property type="evidence" value="ECO:0007669"/>
    <property type="project" value="UniProtKB-UniRule"/>
</dbReference>
<dbReference type="CDD" id="cd00390">
    <property type="entry name" value="Urease_gamma"/>
    <property type="match status" value="1"/>
</dbReference>
<dbReference type="Gene3D" id="3.30.280.10">
    <property type="entry name" value="Urease, gamma-like subunit"/>
    <property type="match status" value="1"/>
</dbReference>
<dbReference type="HAMAP" id="MF_00739">
    <property type="entry name" value="Urease_gamma"/>
    <property type="match status" value="1"/>
</dbReference>
<dbReference type="InterPro" id="IPR012010">
    <property type="entry name" value="Urease_gamma"/>
</dbReference>
<dbReference type="InterPro" id="IPR002026">
    <property type="entry name" value="Urease_gamma/gamma-beta_su"/>
</dbReference>
<dbReference type="InterPro" id="IPR036463">
    <property type="entry name" value="Urease_gamma_sf"/>
</dbReference>
<dbReference type="InterPro" id="IPR050069">
    <property type="entry name" value="Urease_subunit"/>
</dbReference>
<dbReference type="NCBIfam" id="NF009712">
    <property type="entry name" value="PRK13241.1"/>
    <property type="match status" value="1"/>
</dbReference>
<dbReference type="NCBIfam" id="TIGR00193">
    <property type="entry name" value="urease_gam"/>
    <property type="match status" value="1"/>
</dbReference>
<dbReference type="PANTHER" id="PTHR33569">
    <property type="entry name" value="UREASE"/>
    <property type="match status" value="1"/>
</dbReference>
<dbReference type="PANTHER" id="PTHR33569:SF1">
    <property type="entry name" value="UREASE"/>
    <property type="match status" value="1"/>
</dbReference>
<dbReference type="Pfam" id="PF00547">
    <property type="entry name" value="Urease_gamma"/>
    <property type="match status" value="1"/>
</dbReference>
<dbReference type="PIRSF" id="PIRSF001223">
    <property type="entry name" value="Urease_gamma"/>
    <property type="match status" value="1"/>
</dbReference>
<dbReference type="SUPFAM" id="SSF54111">
    <property type="entry name" value="Urease, gamma-subunit"/>
    <property type="match status" value="1"/>
</dbReference>
<sequence length="100" mass="10988">MELTPREKDKLLIFTAGLLAERRKARGLKLNYPEAVAFITCAILEGARDGRSVAELMSYGATLLSREDVMDGIAEMIPEIQVEATFPDGTKLVTVHNPIV</sequence>
<proteinExistence type="inferred from homology"/>
<protein>
    <recommendedName>
        <fullName evidence="1">Urease subunit gamma</fullName>
        <ecNumber evidence="1">3.5.1.5</ecNumber>
    </recommendedName>
    <alternativeName>
        <fullName evidence="1">Urea amidohydrolase subunit gamma</fullName>
    </alternativeName>
</protein>